<feature type="chain" id="PRO_0000231446" description="Putative pterin-4-alpha-carbinolamine dehydratase">
    <location>
        <begin position="1"/>
        <end position="102"/>
    </location>
</feature>
<protein>
    <recommendedName>
        <fullName evidence="1">Putative pterin-4-alpha-carbinolamine dehydratase</fullName>
        <shortName evidence="1">PHS</shortName>
        <ecNumber evidence="1">4.2.1.96</ecNumber>
    </recommendedName>
    <alternativeName>
        <fullName evidence="1">4-alpha-hydroxy-tetrahydropterin dehydratase</fullName>
    </alternativeName>
    <alternativeName>
        <fullName evidence="1">Pterin carbinolamine dehydratase</fullName>
        <shortName evidence="1">PCD</shortName>
    </alternativeName>
</protein>
<evidence type="ECO:0000255" key="1">
    <source>
        <dbReference type="HAMAP-Rule" id="MF_00434"/>
    </source>
</evidence>
<sequence>MIHKLTSEERKTRLEGLPLWTAVPGRDAIQRSLRFADFNEAFGFMTRVAIKAQEMNHHPEWFNVYNRVDITLSTHDADGLTERDIELALFIDRAGAHAQPAA</sequence>
<dbReference type="EC" id="4.2.1.96" evidence="1"/>
<dbReference type="EMBL" id="CP000151">
    <property type="protein sequence ID" value="ABB06860.1"/>
    <property type="molecule type" value="Genomic_DNA"/>
</dbReference>
<dbReference type="RefSeq" id="WP_011350499.1">
    <property type="nucleotide sequence ID" value="NZ_CADFCT010000009.1"/>
</dbReference>
<dbReference type="SMR" id="Q39L06"/>
<dbReference type="GeneID" id="45093167"/>
<dbReference type="KEGG" id="bur:Bcep18194_A3258"/>
<dbReference type="PATRIC" id="fig|482957.22.peg.86"/>
<dbReference type="HOGENOM" id="CLU_081974_3_2_4"/>
<dbReference type="Proteomes" id="UP000002705">
    <property type="component" value="Chromosome 1"/>
</dbReference>
<dbReference type="GO" id="GO:0008124">
    <property type="term" value="F:4-alpha-hydroxytetrahydrobiopterin dehydratase activity"/>
    <property type="evidence" value="ECO:0007669"/>
    <property type="project" value="UniProtKB-UniRule"/>
</dbReference>
<dbReference type="GO" id="GO:0006729">
    <property type="term" value="P:tetrahydrobiopterin biosynthetic process"/>
    <property type="evidence" value="ECO:0007669"/>
    <property type="project" value="InterPro"/>
</dbReference>
<dbReference type="CDD" id="cd00914">
    <property type="entry name" value="PCD_DCoH_subfamily_b"/>
    <property type="match status" value="1"/>
</dbReference>
<dbReference type="Gene3D" id="3.30.1360.20">
    <property type="entry name" value="Transcriptional coactivator/pterin dehydratase"/>
    <property type="match status" value="1"/>
</dbReference>
<dbReference type="HAMAP" id="MF_00434">
    <property type="entry name" value="Pterin_4_alpha"/>
    <property type="match status" value="1"/>
</dbReference>
<dbReference type="InterPro" id="IPR036428">
    <property type="entry name" value="PCD_sf"/>
</dbReference>
<dbReference type="InterPro" id="IPR001533">
    <property type="entry name" value="Pterin_deHydtase"/>
</dbReference>
<dbReference type="NCBIfam" id="NF002018">
    <property type="entry name" value="PRK00823.1-3"/>
    <property type="match status" value="1"/>
</dbReference>
<dbReference type="NCBIfam" id="NF002020">
    <property type="entry name" value="PRK00823.1-5"/>
    <property type="match status" value="1"/>
</dbReference>
<dbReference type="PANTHER" id="PTHR12599">
    <property type="entry name" value="PTERIN-4-ALPHA-CARBINOLAMINE DEHYDRATASE"/>
    <property type="match status" value="1"/>
</dbReference>
<dbReference type="PANTHER" id="PTHR12599:SF0">
    <property type="entry name" value="PTERIN-4-ALPHA-CARBINOLAMINE DEHYDRATASE"/>
    <property type="match status" value="1"/>
</dbReference>
<dbReference type="Pfam" id="PF01329">
    <property type="entry name" value="Pterin_4a"/>
    <property type="match status" value="1"/>
</dbReference>
<dbReference type="SUPFAM" id="SSF55248">
    <property type="entry name" value="PCD-like"/>
    <property type="match status" value="1"/>
</dbReference>
<gene>
    <name type="ordered locus">Bcep18194_A3258</name>
</gene>
<organism>
    <name type="scientific">Burkholderia lata (strain ATCC 17760 / DSM 23089 / LMG 22485 / NCIMB 9086 / R18194 / 383)</name>
    <dbReference type="NCBI Taxonomy" id="482957"/>
    <lineage>
        <taxon>Bacteria</taxon>
        <taxon>Pseudomonadati</taxon>
        <taxon>Pseudomonadota</taxon>
        <taxon>Betaproteobacteria</taxon>
        <taxon>Burkholderiales</taxon>
        <taxon>Burkholderiaceae</taxon>
        <taxon>Burkholderia</taxon>
        <taxon>Burkholderia cepacia complex</taxon>
    </lineage>
</organism>
<accession>Q39L06</accession>
<proteinExistence type="inferred from homology"/>
<comment type="catalytic activity">
    <reaction evidence="1">
        <text>(4aS,6R)-4a-hydroxy-L-erythro-5,6,7,8-tetrahydrobiopterin = (6R)-L-erythro-6,7-dihydrobiopterin + H2O</text>
        <dbReference type="Rhea" id="RHEA:11920"/>
        <dbReference type="ChEBI" id="CHEBI:15377"/>
        <dbReference type="ChEBI" id="CHEBI:15642"/>
        <dbReference type="ChEBI" id="CHEBI:43120"/>
        <dbReference type="EC" id="4.2.1.96"/>
    </reaction>
</comment>
<comment type="similarity">
    <text evidence="1">Belongs to the pterin-4-alpha-carbinolamine dehydratase family.</text>
</comment>
<name>PHS_BURL3</name>
<keyword id="KW-0456">Lyase</keyword>
<reference key="1">
    <citation type="submission" date="2005-10" db="EMBL/GenBank/DDBJ databases">
        <title>Complete sequence of chromosome 1 of Burkholderia sp. 383.</title>
        <authorList>
            <consortium name="US DOE Joint Genome Institute"/>
            <person name="Copeland A."/>
            <person name="Lucas S."/>
            <person name="Lapidus A."/>
            <person name="Barry K."/>
            <person name="Detter J.C."/>
            <person name="Glavina T."/>
            <person name="Hammon N."/>
            <person name="Israni S."/>
            <person name="Pitluck S."/>
            <person name="Chain P."/>
            <person name="Malfatti S."/>
            <person name="Shin M."/>
            <person name="Vergez L."/>
            <person name="Schmutz J."/>
            <person name="Larimer F."/>
            <person name="Land M."/>
            <person name="Kyrpides N."/>
            <person name="Lykidis A."/>
            <person name="Richardson P."/>
        </authorList>
    </citation>
    <scope>NUCLEOTIDE SEQUENCE [LARGE SCALE GENOMIC DNA]</scope>
    <source>
        <strain>ATCC 17760 / DSM 23089 / LMG 22485 / NCIMB 9086 / R18194 / 383</strain>
    </source>
</reference>